<reference key="1">
    <citation type="submission" date="2008-02" db="EMBL/GenBank/DDBJ databases">
        <title>Complete sequence of Synechococcus sp. PCC 7002.</title>
        <authorList>
            <person name="Li T."/>
            <person name="Zhao J."/>
            <person name="Zhao C."/>
            <person name="Liu Z."/>
            <person name="Zhao F."/>
            <person name="Marquardt J."/>
            <person name="Nomura C.T."/>
            <person name="Persson S."/>
            <person name="Detter J.C."/>
            <person name="Richardson P.M."/>
            <person name="Lanz C."/>
            <person name="Schuster S.C."/>
            <person name="Wang J."/>
            <person name="Li S."/>
            <person name="Huang X."/>
            <person name="Cai T."/>
            <person name="Yu Z."/>
            <person name="Luo J."/>
            <person name="Zhao J."/>
            <person name="Bryant D.A."/>
        </authorList>
    </citation>
    <scope>NUCLEOTIDE SEQUENCE [LARGE SCALE GENOMIC DNA]</scope>
    <source>
        <strain>ATCC 27264 / PCC 7002 / PR-6</strain>
    </source>
</reference>
<comment type="function">
    <text evidence="1">One of two assembly initiator proteins, it binds directly to the 5'-end of the 23S rRNA, where it nucleates assembly of the 50S subunit.</text>
</comment>
<comment type="function">
    <text evidence="1">One of the proteins that surrounds the polypeptide exit tunnel on the outside of the subunit.</text>
</comment>
<comment type="subunit">
    <text evidence="1">Part of the 50S ribosomal subunit.</text>
</comment>
<comment type="similarity">
    <text evidence="1">Belongs to the universal ribosomal protein uL24 family.</text>
</comment>
<gene>
    <name evidence="1" type="primary">rplX</name>
    <name evidence="1" type="synonym">rpl24</name>
    <name type="ordered locus">SYNPCC7002_A1054</name>
</gene>
<evidence type="ECO:0000255" key="1">
    <source>
        <dbReference type="HAMAP-Rule" id="MF_01326"/>
    </source>
</evidence>
<evidence type="ECO:0000256" key="2">
    <source>
        <dbReference type="SAM" id="MobiDB-lite"/>
    </source>
</evidence>
<evidence type="ECO:0000305" key="3"/>
<organism>
    <name type="scientific">Picosynechococcus sp. (strain ATCC 27264 / PCC 7002 / PR-6)</name>
    <name type="common">Agmenellum quadruplicatum</name>
    <dbReference type="NCBI Taxonomy" id="32049"/>
    <lineage>
        <taxon>Bacteria</taxon>
        <taxon>Bacillati</taxon>
        <taxon>Cyanobacteriota</taxon>
        <taxon>Cyanophyceae</taxon>
        <taxon>Oscillatoriophycideae</taxon>
        <taxon>Chroococcales</taxon>
        <taxon>Geminocystaceae</taxon>
        <taxon>Picosynechococcus</taxon>
    </lineage>
</organism>
<dbReference type="EMBL" id="CP000951">
    <property type="protein sequence ID" value="ACA99056.1"/>
    <property type="molecule type" value="Genomic_DNA"/>
</dbReference>
<dbReference type="RefSeq" id="WP_012306679.1">
    <property type="nucleotide sequence ID" value="NZ_JAHHPU010000001.1"/>
</dbReference>
<dbReference type="SMR" id="B1XJS8"/>
<dbReference type="STRING" id="32049.SYNPCC7002_A1054"/>
<dbReference type="KEGG" id="syp:SYNPCC7002_A1054"/>
<dbReference type="eggNOG" id="COG0198">
    <property type="taxonomic scope" value="Bacteria"/>
</dbReference>
<dbReference type="HOGENOM" id="CLU_093315_2_3_3"/>
<dbReference type="Proteomes" id="UP000001688">
    <property type="component" value="Chromosome"/>
</dbReference>
<dbReference type="GO" id="GO:1990904">
    <property type="term" value="C:ribonucleoprotein complex"/>
    <property type="evidence" value="ECO:0007669"/>
    <property type="project" value="UniProtKB-KW"/>
</dbReference>
<dbReference type="GO" id="GO:0005840">
    <property type="term" value="C:ribosome"/>
    <property type="evidence" value="ECO:0007669"/>
    <property type="project" value="UniProtKB-KW"/>
</dbReference>
<dbReference type="GO" id="GO:0019843">
    <property type="term" value="F:rRNA binding"/>
    <property type="evidence" value="ECO:0007669"/>
    <property type="project" value="UniProtKB-UniRule"/>
</dbReference>
<dbReference type="GO" id="GO:0003735">
    <property type="term" value="F:structural constituent of ribosome"/>
    <property type="evidence" value="ECO:0007669"/>
    <property type="project" value="InterPro"/>
</dbReference>
<dbReference type="GO" id="GO:0006412">
    <property type="term" value="P:translation"/>
    <property type="evidence" value="ECO:0007669"/>
    <property type="project" value="UniProtKB-UniRule"/>
</dbReference>
<dbReference type="CDD" id="cd06089">
    <property type="entry name" value="KOW_RPL26"/>
    <property type="match status" value="1"/>
</dbReference>
<dbReference type="FunFam" id="2.30.30.30:FF:000004">
    <property type="entry name" value="50S ribosomal protein L24"/>
    <property type="match status" value="1"/>
</dbReference>
<dbReference type="Gene3D" id="2.30.30.30">
    <property type="match status" value="1"/>
</dbReference>
<dbReference type="HAMAP" id="MF_01326_B">
    <property type="entry name" value="Ribosomal_uL24_B"/>
    <property type="match status" value="1"/>
</dbReference>
<dbReference type="InterPro" id="IPR005824">
    <property type="entry name" value="KOW"/>
</dbReference>
<dbReference type="InterPro" id="IPR014722">
    <property type="entry name" value="Rib_uL2_dom2"/>
</dbReference>
<dbReference type="InterPro" id="IPR003256">
    <property type="entry name" value="Ribosomal_uL24"/>
</dbReference>
<dbReference type="InterPro" id="IPR005825">
    <property type="entry name" value="Ribosomal_uL24_CS"/>
</dbReference>
<dbReference type="InterPro" id="IPR041988">
    <property type="entry name" value="Ribosomal_uL24_KOW"/>
</dbReference>
<dbReference type="InterPro" id="IPR008991">
    <property type="entry name" value="Translation_prot_SH3-like_sf"/>
</dbReference>
<dbReference type="NCBIfam" id="TIGR01079">
    <property type="entry name" value="rplX_bact"/>
    <property type="match status" value="1"/>
</dbReference>
<dbReference type="PANTHER" id="PTHR12903">
    <property type="entry name" value="MITOCHONDRIAL RIBOSOMAL PROTEIN L24"/>
    <property type="match status" value="1"/>
</dbReference>
<dbReference type="Pfam" id="PF00467">
    <property type="entry name" value="KOW"/>
    <property type="match status" value="1"/>
</dbReference>
<dbReference type="Pfam" id="PF17136">
    <property type="entry name" value="ribosomal_L24"/>
    <property type="match status" value="1"/>
</dbReference>
<dbReference type="SMART" id="SM00739">
    <property type="entry name" value="KOW"/>
    <property type="match status" value="1"/>
</dbReference>
<dbReference type="SUPFAM" id="SSF50104">
    <property type="entry name" value="Translation proteins SH3-like domain"/>
    <property type="match status" value="1"/>
</dbReference>
<dbReference type="PROSITE" id="PS01108">
    <property type="entry name" value="RIBOSOMAL_L24"/>
    <property type="match status" value="1"/>
</dbReference>
<proteinExistence type="inferred from homology"/>
<protein>
    <recommendedName>
        <fullName evidence="1">Large ribosomal subunit protein uL24</fullName>
    </recommendedName>
    <alternativeName>
        <fullName evidence="3">50S ribosomal protein L24</fullName>
    </alternativeName>
</protein>
<keyword id="KW-1185">Reference proteome</keyword>
<keyword id="KW-0687">Ribonucleoprotein</keyword>
<keyword id="KW-0689">Ribosomal protein</keyword>
<keyword id="KW-0694">RNA-binding</keyword>
<keyword id="KW-0699">rRNA-binding</keyword>
<name>RL24_PICP2</name>
<sequence>MAGRKSSTPTRHKMHVKTGDTVQVISGRDKGKVGEVIKTLPKSSKVVVKDVNIRTKHVKPQQEGESGQIQTFEAPIHSSNVMHYSEKEKVASRIGYQLTEDGRKVRVLKKTGEVID</sequence>
<accession>B1XJS8</accession>
<feature type="chain" id="PRO_0000355721" description="Large ribosomal subunit protein uL24">
    <location>
        <begin position="1"/>
        <end position="116"/>
    </location>
</feature>
<feature type="region of interest" description="Disordered" evidence="2">
    <location>
        <begin position="1"/>
        <end position="27"/>
    </location>
</feature>